<comment type="function">
    <text evidence="1">Accepts ubiquitin from the E1 complex and catalyzes its covalent attachment to other proteins. In vitro catalyzes 'Lys-48'-linked polyubiquitination. Mediates the selective degradation of short-lived and abnormal proteins. Functions in the E6/E6-AP-induced ubiquitination of p53/TP53. Mediates ubiquitination of PEX5 and auto-ubiquitination of STUB1, TRAF6 and TRIM63/MURF1. Ubiquitinates STUB1-associated HSP90AB1 in vitro. Lacks inherent specificity for any particular lysine residue of ubiquitin. Essential for viral activation of IRF3. Mediates polyubiquitination of CYP3A4.</text>
</comment>
<comment type="catalytic activity">
    <reaction evidence="1 2 3">
        <text>S-ubiquitinyl-[E1 ubiquitin-activating enzyme]-L-cysteine + [E2 ubiquitin-conjugating enzyme]-L-cysteine = [E1 ubiquitin-activating enzyme]-L-cysteine + S-ubiquitinyl-[E2 ubiquitin-conjugating enzyme]-L-cysteine.</text>
        <dbReference type="EC" id="2.3.2.23"/>
    </reaction>
</comment>
<comment type="catalytic activity">
    <reaction evidence="1">
        <text>S-ubiquitinyl-[E1 ubiquitin-activating enzyme]-L-cysteine + [acceptor protein]-L-lysine = [E1 ubiquitin-activating enzyme]-L-cysteine + N(6)-monoubiquitinyl-[acceptor protein]-L-lysine.</text>
        <dbReference type="EC" id="2.3.2.24"/>
    </reaction>
</comment>
<comment type="pathway">
    <text evidence="2">Protein modification; protein ubiquitination.</text>
</comment>
<comment type="subunit">
    <text evidence="1">Component of a E3 ubiquitin ligase complex containing UBE2D1, SIAH1, CACYBP/SIP, SKP1, APC and TBL1X. Interacts with RNF11.</text>
</comment>
<comment type="subcellular location">
    <subcellularLocation>
        <location evidence="1">Cytoplasm</location>
    </subcellularLocation>
</comment>
<comment type="PTM">
    <text evidence="1">Autoubiquitinated.</text>
</comment>
<comment type="similarity">
    <text evidence="2">Belongs to the ubiquitin-conjugating enzyme family.</text>
</comment>
<organism>
    <name type="scientific">Bos taurus</name>
    <name type="common">Bovine</name>
    <dbReference type="NCBI Taxonomy" id="9913"/>
    <lineage>
        <taxon>Eukaryota</taxon>
        <taxon>Metazoa</taxon>
        <taxon>Chordata</taxon>
        <taxon>Craniata</taxon>
        <taxon>Vertebrata</taxon>
        <taxon>Euteleostomi</taxon>
        <taxon>Mammalia</taxon>
        <taxon>Eutheria</taxon>
        <taxon>Laurasiatheria</taxon>
        <taxon>Artiodactyla</taxon>
        <taxon>Ruminantia</taxon>
        <taxon>Pecora</taxon>
        <taxon>Bovidae</taxon>
        <taxon>Bovinae</taxon>
        <taxon>Bos</taxon>
    </lineage>
</organism>
<evidence type="ECO:0000250" key="1">
    <source>
        <dbReference type="UniProtKB" id="P51668"/>
    </source>
</evidence>
<evidence type="ECO:0000255" key="2">
    <source>
        <dbReference type="PROSITE-ProRule" id="PRU00388"/>
    </source>
</evidence>
<evidence type="ECO:0000255" key="3">
    <source>
        <dbReference type="PROSITE-ProRule" id="PRU10133"/>
    </source>
</evidence>
<gene>
    <name type="primary">UBE2D1</name>
</gene>
<dbReference type="EC" id="2.3.2.23"/>
<dbReference type="EC" id="2.3.2.24"/>
<dbReference type="EMBL" id="BC111175">
    <property type="protein sequence ID" value="AAI11176.1"/>
    <property type="molecule type" value="mRNA"/>
</dbReference>
<dbReference type="RefSeq" id="NP_001033256.1">
    <property type="nucleotide sequence ID" value="NM_001038167.1"/>
</dbReference>
<dbReference type="BMRB" id="Q2TA10"/>
<dbReference type="SMR" id="Q2TA10"/>
<dbReference type="FunCoup" id="Q2TA10">
    <property type="interactions" value="964"/>
</dbReference>
<dbReference type="STRING" id="9913.ENSBTAP00000051358"/>
<dbReference type="PaxDb" id="9913-ENSBTAP00000051358"/>
<dbReference type="GeneID" id="535287"/>
<dbReference type="KEGG" id="bta:535287"/>
<dbReference type="CTD" id="7321"/>
<dbReference type="VEuPathDB" id="HostDB:ENSBTAG00000020796"/>
<dbReference type="eggNOG" id="KOG0417">
    <property type="taxonomic scope" value="Eukaryota"/>
</dbReference>
<dbReference type="HOGENOM" id="CLU_030988_13_3_1"/>
<dbReference type="InParanoid" id="Q2TA10"/>
<dbReference type="OMA" id="NFHWQAT"/>
<dbReference type="OrthoDB" id="7851174at2759"/>
<dbReference type="TreeFam" id="TF101108"/>
<dbReference type="Reactome" id="R-BTA-1234176">
    <property type="pathway name" value="Oxygen-dependent proline hydroxylation of Hypoxia-inducible Factor Alpha"/>
</dbReference>
<dbReference type="Reactome" id="R-BTA-141430">
    <property type="pathway name" value="Inactivation of APC/C via direct inhibition of the APC/C complex"/>
</dbReference>
<dbReference type="Reactome" id="R-BTA-174048">
    <property type="pathway name" value="APC/C:Cdc20 mediated degradation of Cyclin B"/>
</dbReference>
<dbReference type="Reactome" id="R-BTA-174084">
    <property type="pathway name" value="Autodegradation of Cdh1 by Cdh1:APC/C"/>
</dbReference>
<dbReference type="Reactome" id="R-BTA-174154">
    <property type="pathway name" value="APC/C:Cdc20 mediated degradation of Securin"/>
</dbReference>
<dbReference type="Reactome" id="R-BTA-174178">
    <property type="pathway name" value="APC/C:Cdh1 mediated degradation of Cdc20 and other APC/C:Cdh1 targeted proteins in late mitosis/early G1"/>
</dbReference>
<dbReference type="Reactome" id="R-BTA-174184">
    <property type="pathway name" value="Cdc20:Phospho-APC/C mediated degradation of Cyclin A"/>
</dbReference>
<dbReference type="Reactome" id="R-BTA-176407">
    <property type="pathway name" value="Conversion from APC/C:Cdc20 to APC/C:Cdh1 in late anaphase"/>
</dbReference>
<dbReference type="Reactome" id="R-BTA-176408">
    <property type="pathway name" value="Regulation of APC/C activators between G1/S and early anaphase"/>
</dbReference>
<dbReference type="Reactome" id="R-BTA-176409">
    <property type="pathway name" value="APC/C:Cdc20 mediated degradation of mitotic proteins"/>
</dbReference>
<dbReference type="Reactome" id="R-BTA-176412">
    <property type="pathway name" value="Phosphorylation of the APC/C"/>
</dbReference>
<dbReference type="Reactome" id="R-BTA-179409">
    <property type="pathway name" value="APC-Cdc20 mediated degradation of Nek2A"/>
</dbReference>
<dbReference type="Reactome" id="R-BTA-201451">
    <property type="pathway name" value="Signaling by BMP"/>
</dbReference>
<dbReference type="Reactome" id="R-BTA-202424">
    <property type="pathway name" value="Downstream TCR signaling"/>
</dbReference>
<dbReference type="Reactome" id="R-BTA-2173795">
    <property type="pathway name" value="Downregulation of SMAD2/3:SMAD4 transcriptional activity"/>
</dbReference>
<dbReference type="Reactome" id="R-BTA-2467813">
    <property type="pathway name" value="Separation of Sister Chromatids"/>
</dbReference>
<dbReference type="Reactome" id="R-BTA-2559582">
    <property type="pathway name" value="Senescence-Associated Secretory Phenotype (SASP)"/>
</dbReference>
<dbReference type="Reactome" id="R-BTA-2871837">
    <property type="pathway name" value="FCERI mediated NF-kB activation"/>
</dbReference>
<dbReference type="Reactome" id="R-BTA-5357905">
    <property type="pathway name" value="Regulation of TNFR1 signaling"/>
</dbReference>
<dbReference type="Reactome" id="R-BTA-5607764">
    <property type="pathway name" value="CLEC7A (Dectin-1) signaling"/>
</dbReference>
<dbReference type="Reactome" id="R-BTA-5689896">
    <property type="pathway name" value="Ovarian tumor domain proteases"/>
</dbReference>
<dbReference type="Reactome" id="R-BTA-68867">
    <property type="pathway name" value="Assembly of the pre-replicative complex"/>
</dbReference>
<dbReference type="Reactome" id="R-BTA-69017">
    <property type="pathway name" value="CDK-mediated phosphorylation and removal of Cdc6"/>
</dbReference>
<dbReference type="Reactome" id="R-BTA-8866652">
    <property type="pathway name" value="Synthesis of active ubiquitin: roles of E1 and E2 enzymes"/>
</dbReference>
<dbReference type="Reactome" id="R-BTA-8866654">
    <property type="pathway name" value="E3 ubiquitin ligases ubiquitinate target proteins"/>
</dbReference>
<dbReference type="Reactome" id="R-BTA-8951664">
    <property type="pathway name" value="Neddylation"/>
</dbReference>
<dbReference type="Reactome" id="R-BTA-9033241">
    <property type="pathway name" value="Peroxisomal protein import"/>
</dbReference>
<dbReference type="Reactome" id="R-BTA-937041">
    <property type="pathway name" value="IKK complex recruitment mediated by RIP1"/>
</dbReference>
<dbReference type="Reactome" id="R-BTA-9705462">
    <property type="pathway name" value="Inactivation of CSF3 (G-CSF) signaling"/>
</dbReference>
<dbReference type="Reactome" id="R-BTA-983168">
    <property type="pathway name" value="Antigen processing: Ubiquitination &amp; Proteasome degradation"/>
</dbReference>
<dbReference type="UniPathway" id="UPA00143"/>
<dbReference type="Proteomes" id="UP000009136">
    <property type="component" value="Chromosome 26"/>
</dbReference>
<dbReference type="Bgee" id="ENSBTAG00000020796">
    <property type="expression patterns" value="Expressed in supraspinatus muscle and 103 other cell types or tissues"/>
</dbReference>
<dbReference type="GO" id="GO:0005737">
    <property type="term" value="C:cytoplasm"/>
    <property type="evidence" value="ECO:0000250"/>
    <property type="project" value="UniProtKB"/>
</dbReference>
<dbReference type="GO" id="GO:0005634">
    <property type="term" value="C:nucleus"/>
    <property type="evidence" value="ECO:0000318"/>
    <property type="project" value="GO_Central"/>
</dbReference>
<dbReference type="GO" id="GO:0005524">
    <property type="term" value="F:ATP binding"/>
    <property type="evidence" value="ECO:0007669"/>
    <property type="project" value="UniProtKB-KW"/>
</dbReference>
<dbReference type="GO" id="GO:0061631">
    <property type="term" value="F:ubiquitin conjugating enzyme activity"/>
    <property type="evidence" value="ECO:0000318"/>
    <property type="project" value="GO_Central"/>
</dbReference>
<dbReference type="GO" id="GO:0004842">
    <property type="term" value="F:ubiquitin-protein transferase activity"/>
    <property type="evidence" value="ECO:0000250"/>
    <property type="project" value="UniProtKB"/>
</dbReference>
<dbReference type="GO" id="GO:0070936">
    <property type="term" value="P:protein K48-linked ubiquitination"/>
    <property type="evidence" value="ECO:0000250"/>
    <property type="project" value="UniProtKB"/>
</dbReference>
<dbReference type="GO" id="GO:0006511">
    <property type="term" value="P:ubiquitin-dependent protein catabolic process"/>
    <property type="evidence" value="ECO:0000318"/>
    <property type="project" value="GO_Central"/>
</dbReference>
<dbReference type="CDD" id="cd23792">
    <property type="entry name" value="UBCc_UBE2D"/>
    <property type="match status" value="1"/>
</dbReference>
<dbReference type="FunFam" id="3.10.110.10:FF:000101">
    <property type="entry name" value="Ubiquitin-conjugating enzyme E2 D2"/>
    <property type="match status" value="1"/>
</dbReference>
<dbReference type="Gene3D" id="3.10.110.10">
    <property type="entry name" value="Ubiquitin Conjugating Enzyme"/>
    <property type="match status" value="1"/>
</dbReference>
<dbReference type="InterPro" id="IPR000608">
    <property type="entry name" value="UBQ-conjugat_E2_core"/>
</dbReference>
<dbReference type="InterPro" id="IPR023313">
    <property type="entry name" value="UBQ-conjugating_AS"/>
</dbReference>
<dbReference type="InterPro" id="IPR016135">
    <property type="entry name" value="UBQ-conjugating_enzyme/RWD"/>
</dbReference>
<dbReference type="PANTHER" id="PTHR24068">
    <property type="entry name" value="UBIQUITIN-CONJUGATING ENZYME E2"/>
    <property type="match status" value="1"/>
</dbReference>
<dbReference type="Pfam" id="PF00179">
    <property type="entry name" value="UQ_con"/>
    <property type="match status" value="1"/>
</dbReference>
<dbReference type="SMART" id="SM00212">
    <property type="entry name" value="UBCc"/>
    <property type="match status" value="1"/>
</dbReference>
<dbReference type="SUPFAM" id="SSF54495">
    <property type="entry name" value="UBC-like"/>
    <property type="match status" value="1"/>
</dbReference>
<dbReference type="PROSITE" id="PS00183">
    <property type="entry name" value="UBC_1"/>
    <property type="match status" value="1"/>
</dbReference>
<dbReference type="PROSITE" id="PS50127">
    <property type="entry name" value="UBC_2"/>
    <property type="match status" value="1"/>
</dbReference>
<proteinExistence type="evidence at transcript level"/>
<feature type="chain" id="PRO_0000245033" description="Ubiquitin-conjugating enzyme E2 D1">
    <location>
        <begin position="1"/>
        <end position="147"/>
    </location>
</feature>
<feature type="domain" description="UBC core" evidence="2">
    <location>
        <begin position="1"/>
        <end position="147"/>
    </location>
</feature>
<feature type="active site" description="Glycyl thioester intermediate" evidence="2 3">
    <location>
        <position position="85"/>
    </location>
</feature>
<accession>Q2TA10</accession>
<sequence length="147" mass="16602">MALKRIQKELSDLQRDPPAHCSAGPVGDDLFHWQATIMGPPDSAYQGGVFFLTVHFPTDYPFKPPKIAFTTKIYHPNINSNGSICLDILRSQWSPALTVSKVLLSICSLLCDPNPDDPLVPDIAQIYKSDKEKYNRHAREWTQKYAM</sequence>
<name>UB2D1_BOVIN</name>
<protein>
    <recommendedName>
        <fullName>Ubiquitin-conjugating enzyme E2 D1</fullName>
        <ecNumber>2.3.2.23</ecNumber>
    </recommendedName>
    <alternativeName>
        <fullName>(E3-independent) E2 ubiquitin-conjugating enzyme D1</fullName>
        <ecNumber>2.3.2.24</ecNumber>
    </alternativeName>
    <alternativeName>
        <fullName>E2 ubiquitin-conjugating enzyme D1</fullName>
    </alternativeName>
    <alternativeName>
        <fullName>Ubiquitin carrier protein D1</fullName>
    </alternativeName>
    <alternativeName>
        <fullName>Ubiquitin-protein ligase D1</fullName>
    </alternativeName>
</protein>
<keyword id="KW-0067">ATP-binding</keyword>
<keyword id="KW-0963">Cytoplasm</keyword>
<keyword id="KW-0547">Nucleotide-binding</keyword>
<keyword id="KW-1185">Reference proteome</keyword>
<keyword id="KW-0808">Transferase</keyword>
<keyword id="KW-0832">Ubl conjugation</keyword>
<keyword id="KW-0833">Ubl conjugation pathway</keyword>
<reference key="1">
    <citation type="submission" date="2005-12" db="EMBL/GenBank/DDBJ databases">
        <authorList>
            <consortium name="NIH - Mammalian Gene Collection (MGC) project"/>
        </authorList>
    </citation>
    <scope>NUCLEOTIDE SEQUENCE [LARGE SCALE MRNA]</scope>
    <source>
        <strain>Crossbred X Angus</strain>
        <tissue>Liver</tissue>
    </source>
</reference>